<keyword id="KW-0963">Cytoplasm</keyword>
<keyword id="KW-0413">Isomerase</keyword>
<keyword id="KW-0627">Porphyrin biosynthesis</keyword>
<keyword id="KW-0663">Pyridoxal phosphate</keyword>
<keyword id="KW-1185">Reference proteome</keyword>
<evidence type="ECO:0000255" key="1">
    <source>
        <dbReference type="HAMAP-Rule" id="MF_00375"/>
    </source>
</evidence>
<proteinExistence type="inferred from homology"/>
<comment type="catalytic activity">
    <reaction evidence="1">
        <text>(S)-4-amino-5-oxopentanoate = 5-aminolevulinate</text>
        <dbReference type="Rhea" id="RHEA:14265"/>
        <dbReference type="ChEBI" id="CHEBI:57501"/>
        <dbReference type="ChEBI" id="CHEBI:356416"/>
        <dbReference type="EC" id="5.4.3.8"/>
    </reaction>
</comment>
<comment type="cofactor">
    <cofactor evidence="1">
        <name>pyridoxal 5'-phosphate</name>
        <dbReference type="ChEBI" id="CHEBI:597326"/>
    </cofactor>
</comment>
<comment type="pathway">
    <text evidence="1">Porphyrin-containing compound metabolism; protoporphyrin-IX biosynthesis; 5-aminolevulinate from L-glutamyl-tRNA(Glu): step 2/2.</text>
</comment>
<comment type="subunit">
    <text evidence="1">Homodimer.</text>
</comment>
<comment type="subcellular location">
    <subcellularLocation>
        <location evidence="1">Cytoplasm</location>
    </subcellularLocation>
</comment>
<comment type="similarity">
    <text evidence="1">Belongs to the class-III pyridoxal-phosphate-dependent aminotransferase family. HemL subfamily.</text>
</comment>
<feature type="chain" id="PRO_0000120416" description="Glutamate-1-semialdehyde 2,1-aminomutase">
    <location>
        <begin position="1"/>
        <end position="447"/>
    </location>
</feature>
<feature type="modified residue" description="N6-(pyridoxal phosphate)lysine" evidence="1">
    <location>
        <position position="272"/>
    </location>
</feature>
<protein>
    <recommendedName>
        <fullName evidence="1">Glutamate-1-semialdehyde 2,1-aminomutase</fullName>
        <shortName evidence="1">GSA</shortName>
        <ecNumber evidence="1">5.4.3.8</ecNumber>
    </recommendedName>
    <alternativeName>
        <fullName evidence="1">Glutamate-1-semialdehyde aminotransferase</fullName>
        <shortName evidence="1">GSA-AT</shortName>
    </alternativeName>
</protein>
<dbReference type="EC" id="5.4.3.8" evidence="1"/>
<dbReference type="EMBL" id="AE016822">
    <property type="protein sequence ID" value="AAT88197.1"/>
    <property type="molecule type" value="Genomic_DNA"/>
</dbReference>
<dbReference type="SMR" id="Q6AHE8"/>
<dbReference type="STRING" id="281090.Lxx01130"/>
<dbReference type="KEGG" id="lxx:Lxx01130"/>
<dbReference type="eggNOG" id="COG0001">
    <property type="taxonomic scope" value="Bacteria"/>
</dbReference>
<dbReference type="HOGENOM" id="CLU_016922_1_5_11"/>
<dbReference type="UniPathway" id="UPA00251">
    <property type="reaction ID" value="UER00317"/>
</dbReference>
<dbReference type="Proteomes" id="UP000001306">
    <property type="component" value="Chromosome"/>
</dbReference>
<dbReference type="GO" id="GO:0005737">
    <property type="term" value="C:cytoplasm"/>
    <property type="evidence" value="ECO:0007669"/>
    <property type="project" value="UniProtKB-SubCell"/>
</dbReference>
<dbReference type="GO" id="GO:0042286">
    <property type="term" value="F:glutamate-1-semialdehyde 2,1-aminomutase activity"/>
    <property type="evidence" value="ECO:0007669"/>
    <property type="project" value="UniProtKB-UniRule"/>
</dbReference>
<dbReference type="GO" id="GO:0030170">
    <property type="term" value="F:pyridoxal phosphate binding"/>
    <property type="evidence" value="ECO:0007669"/>
    <property type="project" value="InterPro"/>
</dbReference>
<dbReference type="GO" id="GO:0008483">
    <property type="term" value="F:transaminase activity"/>
    <property type="evidence" value="ECO:0007669"/>
    <property type="project" value="InterPro"/>
</dbReference>
<dbReference type="GO" id="GO:0006782">
    <property type="term" value="P:protoporphyrinogen IX biosynthetic process"/>
    <property type="evidence" value="ECO:0007669"/>
    <property type="project" value="UniProtKB-UniRule"/>
</dbReference>
<dbReference type="CDD" id="cd00610">
    <property type="entry name" value="OAT_like"/>
    <property type="match status" value="1"/>
</dbReference>
<dbReference type="FunFam" id="3.40.640.10:FF:000021">
    <property type="entry name" value="Glutamate-1-semialdehyde 2,1-aminomutase"/>
    <property type="match status" value="1"/>
</dbReference>
<dbReference type="Gene3D" id="3.90.1150.10">
    <property type="entry name" value="Aspartate Aminotransferase, domain 1"/>
    <property type="match status" value="1"/>
</dbReference>
<dbReference type="Gene3D" id="3.40.640.10">
    <property type="entry name" value="Type I PLP-dependent aspartate aminotransferase-like (Major domain)"/>
    <property type="match status" value="1"/>
</dbReference>
<dbReference type="HAMAP" id="MF_00375">
    <property type="entry name" value="HemL_aminotrans_3"/>
    <property type="match status" value="1"/>
</dbReference>
<dbReference type="InterPro" id="IPR004639">
    <property type="entry name" value="4pyrrol_synth_GluAld_NH2Trfase"/>
</dbReference>
<dbReference type="InterPro" id="IPR005814">
    <property type="entry name" value="Aminotrans_3"/>
</dbReference>
<dbReference type="InterPro" id="IPR049704">
    <property type="entry name" value="Aminotrans_3_PPA_site"/>
</dbReference>
<dbReference type="InterPro" id="IPR015424">
    <property type="entry name" value="PyrdxlP-dep_Trfase"/>
</dbReference>
<dbReference type="InterPro" id="IPR015421">
    <property type="entry name" value="PyrdxlP-dep_Trfase_major"/>
</dbReference>
<dbReference type="InterPro" id="IPR015422">
    <property type="entry name" value="PyrdxlP-dep_Trfase_small"/>
</dbReference>
<dbReference type="NCBIfam" id="TIGR00713">
    <property type="entry name" value="hemL"/>
    <property type="match status" value="1"/>
</dbReference>
<dbReference type="NCBIfam" id="NF000818">
    <property type="entry name" value="PRK00062.1"/>
    <property type="match status" value="1"/>
</dbReference>
<dbReference type="PANTHER" id="PTHR43713">
    <property type="entry name" value="GLUTAMATE-1-SEMIALDEHYDE 2,1-AMINOMUTASE"/>
    <property type="match status" value="1"/>
</dbReference>
<dbReference type="PANTHER" id="PTHR43713:SF3">
    <property type="entry name" value="GLUTAMATE-1-SEMIALDEHYDE 2,1-AMINOMUTASE 1, CHLOROPLASTIC-RELATED"/>
    <property type="match status" value="1"/>
</dbReference>
<dbReference type="Pfam" id="PF00202">
    <property type="entry name" value="Aminotran_3"/>
    <property type="match status" value="1"/>
</dbReference>
<dbReference type="SUPFAM" id="SSF53383">
    <property type="entry name" value="PLP-dependent transferases"/>
    <property type="match status" value="1"/>
</dbReference>
<dbReference type="PROSITE" id="PS00600">
    <property type="entry name" value="AA_TRANSFER_CLASS_3"/>
    <property type="match status" value="1"/>
</dbReference>
<gene>
    <name evidence="1" type="primary">hemL</name>
    <name type="ordered locus">Lxx01130</name>
</gene>
<reference key="1">
    <citation type="journal article" date="2004" name="Mol. Plant Microbe Interact.">
        <title>The genome sequence of the Gram-positive sugarcane pathogen Leifsonia xyli subsp. xyli.</title>
        <authorList>
            <person name="Monteiro-Vitorello C.B."/>
            <person name="Camargo L.E.A."/>
            <person name="Van Sluys M.A."/>
            <person name="Kitajima J.P."/>
            <person name="Truffi D."/>
            <person name="do Amaral A.M."/>
            <person name="Harakava R."/>
            <person name="de Oliveira J.C.F."/>
            <person name="Wood D."/>
            <person name="de Oliveira M.C."/>
            <person name="Miyaki C.Y."/>
            <person name="Takita M.A."/>
            <person name="da Silva A.C.R."/>
            <person name="Furlan L.R."/>
            <person name="Carraro D.M."/>
            <person name="Camarotte G."/>
            <person name="Almeida N.F. Jr."/>
            <person name="Carrer H."/>
            <person name="Coutinho L.L."/>
            <person name="El-Dorry H.A."/>
            <person name="Ferro M.I.T."/>
            <person name="Gagliardi P.R."/>
            <person name="Giglioti E."/>
            <person name="Goldman M.H.S."/>
            <person name="Goldman G.H."/>
            <person name="Kimura E.T."/>
            <person name="Ferro E.S."/>
            <person name="Kuramae E.E."/>
            <person name="Lemos E.G.M."/>
            <person name="Lemos M.V.F."/>
            <person name="Mauro S.M.Z."/>
            <person name="Machado M.A."/>
            <person name="Marino C.L."/>
            <person name="Menck C.F."/>
            <person name="Nunes L.R."/>
            <person name="Oliveira R.C."/>
            <person name="Pereira G.G."/>
            <person name="Siqueira W."/>
            <person name="de Souza A.A."/>
            <person name="Tsai S.M."/>
            <person name="Zanca A.S."/>
            <person name="Simpson A.J.G."/>
            <person name="Brumbley S.M."/>
            <person name="Setubal J.C."/>
        </authorList>
    </citation>
    <scope>NUCLEOTIDE SEQUENCE [LARGE SCALE GENOMIC DNA]</scope>
    <source>
        <strain>CTCB07</strain>
    </source>
</reference>
<sequence length="447" mass="45819">MAAAAIGEANLAQFGRAQRVIPGGVNSPVRAFRSVGGTPRFMVFANGPYIVDAEGREYVDLVASWGPAILGHAHPAVVSAVQEAAARGLSFGASTPAETELAEAVIARVPFVEKLRLVSTGTEATMTAIRLARGFTGRPLLIKFAGHYHGHSDSLLAEAGSGLATLSLPGSAGVTEATAAQTLVLPYNDLGAVRAVFEANGPDIAAVIAEAAAANMGVVPPDEGFNAALTDLAHEYGALLILDEVLTGFRVSEAGFWGLDRGYTPDLVAFGKVIGGGMPLAAVGGRAELMDILAPAGPVYQAGTLSGNPVAVAAGLATLAHAGEAVYDRLDIVAGTLSAAVSDALTAEGVAHSVQRAGNLFSFVFGDVAAAPRTFAEVQRQEAFRYRAFFHAMLDAGVSLPPSVFEAWFVTAAHDDAAVGRVLEALPAAARAAASACPGRPLLFVRR</sequence>
<accession>Q6AHE8</accession>
<name>GSA_LEIXX</name>
<organism>
    <name type="scientific">Leifsonia xyli subsp. xyli (strain CTCB07)</name>
    <dbReference type="NCBI Taxonomy" id="281090"/>
    <lineage>
        <taxon>Bacteria</taxon>
        <taxon>Bacillati</taxon>
        <taxon>Actinomycetota</taxon>
        <taxon>Actinomycetes</taxon>
        <taxon>Micrococcales</taxon>
        <taxon>Microbacteriaceae</taxon>
        <taxon>Leifsonia</taxon>
    </lineage>
</organism>